<accession>B7HNU0</accession>
<dbReference type="EC" id="2.2.1.7" evidence="1"/>
<dbReference type="EMBL" id="CP001177">
    <property type="protein sequence ID" value="ACJ79369.1"/>
    <property type="molecule type" value="Genomic_DNA"/>
</dbReference>
<dbReference type="SMR" id="B7HNU0"/>
<dbReference type="KEGG" id="bcr:BCAH187_A4307"/>
<dbReference type="HOGENOM" id="CLU_009227_1_4_9"/>
<dbReference type="UniPathway" id="UPA00064">
    <property type="reaction ID" value="UER00091"/>
</dbReference>
<dbReference type="Proteomes" id="UP000002214">
    <property type="component" value="Chromosome"/>
</dbReference>
<dbReference type="GO" id="GO:0005829">
    <property type="term" value="C:cytosol"/>
    <property type="evidence" value="ECO:0007669"/>
    <property type="project" value="TreeGrafter"/>
</dbReference>
<dbReference type="GO" id="GO:0008661">
    <property type="term" value="F:1-deoxy-D-xylulose-5-phosphate synthase activity"/>
    <property type="evidence" value="ECO:0007669"/>
    <property type="project" value="UniProtKB-UniRule"/>
</dbReference>
<dbReference type="GO" id="GO:0000287">
    <property type="term" value="F:magnesium ion binding"/>
    <property type="evidence" value="ECO:0007669"/>
    <property type="project" value="UniProtKB-UniRule"/>
</dbReference>
<dbReference type="GO" id="GO:0030976">
    <property type="term" value="F:thiamine pyrophosphate binding"/>
    <property type="evidence" value="ECO:0007669"/>
    <property type="project" value="UniProtKB-UniRule"/>
</dbReference>
<dbReference type="GO" id="GO:0052865">
    <property type="term" value="P:1-deoxy-D-xylulose 5-phosphate biosynthetic process"/>
    <property type="evidence" value="ECO:0007669"/>
    <property type="project" value="UniProtKB-UniPathway"/>
</dbReference>
<dbReference type="GO" id="GO:0019288">
    <property type="term" value="P:isopentenyl diphosphate biosynthetic process, methylerythritol 4-phosphate pathway"/>
    <property type="evidence" value="ECO:0007669"/>
    <property type="project" value="TreeGrafter"/>
</dbReference>
<dbReference type="GO" id="GO:0016114">
    <property type="term" value="P:terpenoid biosynthetic process"/>
    <property type="evidence" value="ECO:0007669"/>
    <property type="project" value="UniProtKB-UniRule"/>
</dbReference>
<dbReference type="GO" id="GO:0009228">
    <property type="term" value="P:thiamine biosynthetic process"/>
    <property type="evidence" value="ECO:0007669"/>
    <property type="project" value="UniProtKB-UniRule"/>
</dbReference>
<dbReference type="CDD" id="cd02007">
    <property type="entry name" value="TPP_DXS"/>
    <property type="match status" value="1"/>
</dbReference>
<dbReference type="CDD" id="cd07033">
    <property type="entry name" value="TPP_PYR_DXS_TK_like"/>
    <property type="match status" value="1"/>
</dbReference>
<dbReference type="FunFam" id="3.40.50.920:FF:000002">
    <property type="entry name" value="1-deoxy-D-xylulose-5-phosphate synthase"/>
    <property type="match status" value="1"/>
</dbReference>
<dbReference type="FunFam" id="3.40.50.970:FF:000030">
    <property type="entry name" value="1-deoxy-D-xylulose-5-phosphate synthase"/>
    <property type="match status" value="1"/>
</dbReference>
<dbReference type="Gene3D" id="3.40.50.920">
    <property type="match status" value="1"/>
</dbReference>
<dbReference type="Gene3D" id="3.40.50.970">
    <property type="match status" value="2"/>
</dbReference>
<dbReference type="HAMAP" id="MF_00315">
    <property type="entry name" value="DXP_synth"/>
    <property type="match status" value="1"/>
</dbReference>
<dbReference type="InterPro" id="IPR005477">
    <property type="entry name" value="Dxylulose-5-P_synthase"/>
</dbReference>
<dbReference type="InterPro" id="IPR029061">
    <property type="entry name" value="THDP-binding"/>
</dbReference>
<dbReference type="InterPro" id="IPR009014">
    <property type="entry name" value="Transketo_C/PFOR_II"/>
</dbReference>
<dbReference type="InterPro" id="IPR005475">
    <property type="entry name" value="Transketolase-like_Pyr-bd"/>
</dbReference>
<dbReference type="InterPro" id="IPR020826">
    <property type="entry name" value="Transketolase_BS"/>
</dbReference>
<dbReference type="InterPro" id="IPR033248">
    <property type="entry name" value="Transketolase_C"/>
</dbReference>
<dbReference type="InterPro" id="IPR049557">
    <property type="entry name" value="Transketolase_CS"/>
</dbReference>
<dbReference type="NCBIfam" id="TIGR00204">
    <property type="entry name" value="dxs"/>
    <property type="match status" value="1"/>
</dbReference>
<dbReference type="NCBIfam" id="NF003933">
    <property type="entry name" value="PRK05444.2-2"/>
    <property type="match status" value="1"/>
</dbReference>
<dbReference type="PANTHER" id="PTHR43322">
    <property type="entry name" value="1-D-DEOXYXYLULOSE 5-PHOSPHATE SYNTHASE-RELATED"/>
    <property type="match status" value="1"/>
</dbReference>
<dbReference type="PANTHER" id="PTHR43322:SF5">
    <property type="entry name" value="1-DEOXY-D-XYLULOSE-5-PHOSPHATE SYNTHASE, CHLOROPLASTIC"/>
    <property type="match status" value="1"/>
</dbReference>
<dbReference type="Pfam" id="PF13292">
    <property type="entry name" value="DXP_synthase_N"/>
    <property type="match status" value="1"/>
</dbReference>
<dbReference type="Pfam" id="PF02779">
    <property type="entry name" value="Transket_pyr"/>
    <property type="match status" value="1"/>
</dbReference>
<dbReference type="Pfam" id="PF02780">
    <property type="entry name" value="Transketolase_C"/>
    <property type="match status" value="1"/>
</dbReference>
<dbReference type="SMART" id="SM00861">
    <property type="entry name" value="Transket_pyr"/>
    <property type="match status" value="1"/>
</dbReference>
<dbReference type="SUPFAM" id="SSF52518">
    <property type="entry name" value="Thiamin diphosphate-binding fold (THDP-binding)"/>
    <property type="match status" value="2"/>
</dbReference>
<dbReference type="SUPFAM" id="SSF52922">
    <property type="entry name" value="TK C-terminal domain-like"/>
    <property type="match status" value="1"/>
</dbReference>
<dbReference type="PROSITE" id="PS00801">
    <property type="entry name" value="TRANSKETOLASE_1"/>
    <property type="match status" value="1"/>
</dbReference>
<dbReference type="PROSITE" id="PS00802">
    <property type="entry name" value="TRANSKETOLASE_2"/>
    <property type="match status" value="1"/>
</dbReference>
<gene>
    <name evidence="1" type="primary">dxs</name>
    <name type="ordered locus">BCAH187_A4307</name>
</gene>
<organism>
    <name type="scientific">Bacillus cereus (strain AH187)</name>
    <dbReference type="NCBI Taxonomy" id="405534"/>
    <lineage>
        <taxon>Bacteria</taxon>
        <taxon>Bacillati</taxon>
        <taxon>Bacillota</taxon>
        <taxon>Bacilli</taxon>
        <taxon>Bacillales</taxon>
        <taxon>Bacillaceae</taxon>
        <taxon>Bacillus</taxon>
        <taxon>Bacillus cereus group</taxon>
    </lineage>
</organism>
<comment type="function">
    <text evidence="1">Catalyzes the acyloin condensation reaction between C atoms 2 and 3 of pyruvate and glyceraldehyde 3-phosphate to yield 1-deoxy-D-xylulose-5-phosphate (DXP).</text>
</comment>
<comment type="catalytic activity">
    <reaction evidence="1">
        <text>D-glyceraldehyde 3-phosphate + pyruvate + H(+) = 1-deoxy-D-xylulose 5-phosphate + CO2</text>
        <dbReference type="Rhea" id="RHEA:12605"/>
        <dbReference type="ChEBI" id="CHEBI:15361"/>
        <dbReference type="ChEBI" id="CHEBI:15378"/>
        <dbReference type="ChEBI" id="CHEBI:16526"/>
        <dbReference type="ChEBI" id="CHEBI:57792"/>
        <dbReference type="ChEBI" id="CHEBI:59776"/>
        <dbReference type="EC" id="2.2.1.7"/>
    </reaction>
</comment>
<comment type="cofactor">
    <cofactor evidence="1">
        <name>Mg(2+)</name>
        <dbReference type="ChEBI" id="CHEBI:18420"/>
    </cofactor>
    <text evidence="1">Binds 1 Mg(2+) ion per subunit.</text>
</comment>
<comment type="cofactor">
    <cofactor evidence="1">
        <name>thiamine diphosphate</name>
        <dbReference type="ChEBI" id="CHEBI:58937"/>
    </cofactor>
    <text evidence="1">Binds 1 thiamine pyrophosphate per subunit.</text>
</comment>
<comment type="pathway">
    <text evidence="1">Metabolic intermediate biosynthesis; 1-deoxy-D-xylulose 5-phosphate biosynthesis; 1-deoxy-D-xylulose 5-phosphate from D-glyceraldehyde 3-phosphate and pyruvate: step 1/1.</text>
</comment>
<comment type="subunit">
    <text evidence="1">Homodimer.</text>
</comment>
<comment type="similarity">
    <text evidence="1">Belongs to the transketolase family. DXPS subfamily.</text>
</comment>
<feature type="chain" id="PRO_1000119540" description="1-deoxy-D-xylulose-5-phosphate synthase">
    <location>
        <begin position="1"/>
        <end position="630"/>
    </location>
</feature>
<feature type="binding site" evidence="1">
    <location>
        <position position="72"/>
    </location>
    <ligand>
        <name>thiamine diphosphate</name>
        <dbReference type="ChEBI" id="CHEBI:58937"/>
    </ligand>
</feature>
<feature type="binding site" evidence="1">
    <location>
        <begin position="113"/>
        <end position="115"/>
    </location>
    <ligand>
        <name>thiamine diphosphate</name>
        <dbReference type="ChEBI" id="CHEBI:58937"/>
    </ligand>
</feature>
<feature type="binding site" evidence="1">
    <location>
        <position position="144"/>
    </location>
    <ligand>
        <name>Mg(2+)</name>
        <dbReference type="ChEBI" id="CHEBI:18420"/>
    </ligand>
</feature>
<feature type="binding site" evidence="1">
    <location>
        <begin position="145"/>
        <end position="146"/>
    </location>
    <ligand>
        <name>thiamine diphosphate</name>
        <dbReference type="ChEBI" id="CHEBI:58937"/>
    </ligand>
</feature>
<feature type="binding site" evidence="1">
    <location>
        <position position="173"/>
    </location>
    <ligand>
        <name>Mg(2+)</name>
        <dbReference type="ChEBI" id="CHEBI:18420"/>
    </ligand>
</feature>
<feature type="binding site" evidence="1">
    <location>
        <position position="173"/>
    </location>
    <ligand>
        <name>thiamine diphosphate</name>
        <dbReference type="ChEBI" id="CHEBI:58937"/>
    </ligand>
</feature>
<feature type="binding site" evidence="1">
    <location>
        <position position="284"/>
    </location>
    <ligand>
        <name>thiamine diphosphate</name>
        <dbReference type="ChEBI" id="CHEBI:58937"/>
    </ligand>
</feature>
<feature type="binding site" evidence="1">
    <location>
        <position position="367"/>
    </location>
    <ligand>
        <name>thiamine diphosphate</name>
        <dbReference type="ChEBI" id="CHEBI:58937"/>
    </ligand>
</feature>
<sequence length="630" mass="69441">MDLTQIQNPSFLKEMSISELEGLSEDIRKFLIEELSQTGGHIAPNLGVVELTIALHKLFDSPKDKFLWDVGHQSYVHKILTGRAKEFGTLRQYQGLCGFPKRCESEHDVWETGHSSTSLSAAMGMALARDLKKTKEYVIPIIGDGALTGGMALEALNHIGHEKTDMIVILNDNEMSIAPNVGALHNVLGRLRTAGKYHWVKDELEYILKKIPAVGGKVAATAEKIKDSLKYLLVSGVFFEELGFTYLGPVDGHDYEKLFETLQYAKKTKGPVLVHVITKKGKGYKPAESDVIGTWHGTGPYKIESGDFVKPKEVAPAWSAVVSETVLKLARTDERIVAITPAMPVGSKLEKFQKEFPDRMIDVGIAEQHATTMAAGMATQGMKPFLAIYSTFLQRAYDQVVHDICRQNLNVFIGIDRSGLVGADGETHQGVFDISFLRHLPNMVLMMPKDENEGQHLVYTAMQYEDGPIALRYARGNGLGVHMDEELKAIPIGSWETLKEGTQAAILTFGTTIPMAMEAAERLEKAGVSVKVVNARFIKPMDEAYLHDLLGKNIPILTIEEACLIGGFGTGVVEFASENGYHSALVERMGIPDRFIEHGSVTKLLEEIGLTTDAVVDRIHTMIPSKQKRA</sequence>
<keyword id="KW-0414">Isoprene biosynthesis</keyword>
<keyword id="KW-0460">Magnesium</keyword>
<keyword id="KW-0479">Metal-binding</keyword>
<keyword id="KW-0784">Thiamine biosynthesis</keyword>
<keyword id="KW-0786">Thiamine pyrophosphate</keyword>
<keyword id="KW-0808">Transferase</keyword>
<reference key="1">
    <citation type="submission" date="2008-10" db="EMBL/GenBank/DDBJ databases">
        <title>Genome sequence of Bacillus cereus AH187.</title>
        <authorList>
            <person name="Dodson R.J."/>
            <person name="Durkin A.S."/>
            <person name="Rosovitz M.J."/>
            <person name="Rasko D.A."/>
            <person name="Kolsto A.B."/>
            <person name="Okstad O.A."/>
            <person name="Ravel J."/>
            <person name="Sutton G."/>
        </authorList>
    </citation>
    <scope>NUCLEOTIDE SEQUENCE [LARGE SCALE GENOMIC DNA]</scope>
    <source>
        <strain>AH187</strain>
    </source>
</reference>
<evidence type="ECO:0000255" key="1">
    <source>
        <dbReference type="HAMAP-Rule" id="MF_00315"/>
    </source>
</evidence>
<name>DXS_BACC7</name>
<protein>
    <recommendedName>
        <fullName evidence="1">1-deoxy-D-xylulose-5-phosphate synthase</fullName>
        <ecNumber evidence="1">2.2.1.7</ecNumber>
    </recommendedName>
    <alternativeName>
        <fullName evidence="1">1-deoxyxylulose-5-phosphate synthase</fullName>
        <shortName evidence="1">DXP synthase</shortName>
        <shortName evidence="1">DXPS</shortName>
    </alternativeName>
</protein>
<proteinExistence type="inferred from homology"/>